<accession>Q8CBR6</accession>
<accession>Q4W655</accession>
<comment type="function">
    <text evidence="3 4 5 6 7 9 11 12 13 14 15">Contributes to various developmental events and other processes such as wound healing and cholesterol homeostasis through its interactions with multiple signaling pathways (PubMed:21856951, PubMed:22995554, PubMed:25159578, PubMed:31391339). Wnt signaling inhibitor which competes with WNT2B for binding to Wnt receptor FZD4 and represses WNT2B-dependent development of the peripheral eye (PubMed:21856951). Plays a role in regulating the hair cycle by controlling TGFB1 signaling (PubMed:22995554). Required for the development of the anterior commissure in the brain by inhibiting neurite outgrowth (PubMed:21055390, PubMed:23206892). Essential for terminal differentiation of hippocampal neural stem cells (PubMed:31983064). Plays a role in regulating bone elongation and bone mass by modulating growth plate chondrocyte function and overall body size (PubMed:30271858). Required for development of the inner ear through its involvement in stereocilia formation in inner hair cells (PubMed:32127020). Facilitates wound healing by inhibiting secretion of TGFB1 from macrophages which prevents myofibroblast differentiation, maintaining inflammatory cell quiescence (PubMed:25159578). Plays a role in cholesterol homeostasis by reducing circulating high-density lipoprotein cholesterol, lowering cholesterol efflux capacity and decreasing cholesterol-to-bile acid conversion in the liver (PubMed:31391339). In one study, shown to negatively regulate sympathetic innervation in brown fat, leading to reduced energy expenditure (PubMed:31535079). In another study, shown not to affect brown fat thermogenic capacity, body weight gain or glucose homeostasis (PubMed:31767170).</text>
</comment>
<comment type="subunit">
    <text evidence="4 5 6 8">Interacts with FZD4 (via FZ domain); competes with WNT2B for binding to FZD4, inhibiting Wnt signaling and repressing peripheral eye development (PubMed:21856951). Interacts with TGFB1; the interaction contributes to regulation of the hair cycle (PubMed:22995554). Interacts with netrin (PubMed:23206892). Interacts with CCN2 (PubMed:30232710).</text>
</comment>
<comment type="subcellular location">
    <subcellularLocation>
        <location evidence="10 11 12 13">Secreted</location>
    </subcellularLocation>
</comment>
<comment type="tissue specificity">
    <text evidence="3 4 5 6 7 9 12 14 15">Expressed in macrophages in inflamed wounds with wound expression starting 2 days post-wounding (dpw) (at protein level) (PubMed:25159578). At 7 dpw, expressed from epidermis and extracellular matrix in the wound edge to neoepidermis and granulation tissue and in panniculus carnosus under the granulation tissue (at protein level) (PubMed:25159578). After fibrosis, disappears in the dermal area at 11 dpw (at protein level) (PubMed:25159578). Expressed in the hair follicle during morphogenesis and the hair cycle (at protein level) (PubMed:22995554). In embryonic brain, strong expression in the olfactory bulb, anterior olfactory nucleus, neocortex, piriform cortex, glial wedge, midline zipper glia, indusium griseum and the area surrounding the anterior commissure (AC) but not on AC axons (at protein level) (PubMed:23206892). In the adult eye, expressed in retinal layers, lens epithelium, and ciliary body where it is expressed predominantly in the inner non-pigmented layer (PubMed:21856951). Expressed in almost all brain regions in the embryo, in the cortex and the lateral ventricle at P0 and is restricted to the subventricular zone and lateral nucleus of the amygdala in adults (PubMed:21055390). Prominent expression in hippocampal regions from early postnatal stages until postnatal day 15 and gradually declines at later stages (PubMed:31983064). Expressed in almost all bone regions in the femurs of juveniles (PubMed:30271858). In the inner ear, accumulates in nonprosensory regions during early embryonic stages and in both nonprosensory and prosensory regions in late embryonic stages (PubMed:32127020). In the adult ear, expressed in the organ of Corti, spiral ganglion cells, and the stria vascularis (PubMed:32127020). Highly expressed in the liver where it is detected primarily in hepatocytes but not in non-parenchymal cells (PubMed:31535079).</text>
</comment>
<comment type="developmental stage">
    <text evidence="5">During the hair cycle, expression is down-regulated at the first telogen stage and is up-regulated at the secondary anagen stage.</text>
</comment>
<comment type="induction">
    <text evidence="10 11">By endoplasmic reticulum stress and inflammation (PubMed:31391339). Up-regulated in response to high-fat diet and this is reversed by return to a normal diet (PubMed:30595550, PubMed:31391339).</text>
</comment>
<comment type="disruption phenotype">
    <text evidence="3 4 5 6 7 9 10 11 12 13 14 15">Expansion of the ciliary body and up-regulation of Wnt2b and Fzd4 expression in the developing peripheral eye (PubMed:21856951). Delayed hair cycle with down-regulation of Tgfb1 throughout the cycle and low levels of phosphorylated Smad2/3 (PubMed:22995554). Failure of the axons of the anterior and posterior parts of the anterior commissure (AC) to cross the midline, leading to an almost total absence of the AC in adults (PubMed:21055390, PubMed:23206892). Reduced size of hippocampus and dentate gyrus (DG), increased number of neural stem cells (NSCs) in the DG at P15, altered ratio of proliferating and quiescent NSCs with an increase in the number of proliferating NSCs in the DG at P15, and abnormal terminal differentiation of NSCs (PubMed:31983064). Decreased weight and short stature due to decreased longitudinal bone growth coupled with low bone mass (PubMed:30271858). Shortened and morphologically abnormal growth plates and abnormal expression of chondrogenic marker genes (PubMed:30271858). Formation of abnormally short and dislocated stereocilia in the inner hair cells of the ear and hearing loss (PubMed:32127020). Reduced cochlear expression of Sox2 and translocation of Sox2 from the nucleus to the cytoplasm in spiral ganglion cells (SGCs) at P0 (PubMed:32127020). Redistribution of Bmp4 with diminished expression in the outer sulcus and sparse distribution around the cochlear epithelium (PubMed:32127020). Reduced number of SGCs at the cochlear basal turn (PubMed:32127020). Excess wound inflammation with up-regulation of Tgfb1, Stat3 and Il6 during wound healing (PubMed:25159578). Reduced body size, increased levels of circulating high-density lipoprotein cholesterol and increased cholesterol efflux (PubMed:31391339). Some studues showed increased sympathetic innervation and norepinephrine release in adipose tissue, leading to enhanced adrenergic signaling and thermogenesis, attenuation of brown fat whitening and protection from diet-induced obesity (PubMed:30595550, PubMed:31535079). Another study found no effect on brown fat thermogenic capacity, protection from diet-induced obesity or glucose homeostasis (PubMed:31767170). Double knockout of Tsku and Draxi results in a higher frequency of AC defects than single knockout of either Tsku or Draxi (PubMed:23206892).</text>
</comment>
<comment type="miscellaneous">
    <text evidence="1">This factor is named 'Tsukushi' because its expression pattern in chick embryos is similar to the shape of the Japanese horsetail plant, tsukushi.</text>
</comment>
<comment type="sequence caution" evidence="18">
    <conflict type="erroneous initiation">
        <sequence resource="EMBL-CDS" id="BAC29069"/>
    </conflict>
</comment>
<comment type="sequence caution" evidence="18">
    <conflict type="erroneous initiation">
        <sequence resource="EMBL-CDS" id="BAE23270"/>
    </conflict>
</comment>
<protein>
    <recommendedName>
        <fullName evidence="16">Tsukushi</fullName>
    </recommendedName>
    <alternativeName>
        <fullName evidence="19">Leucine-rich repeat-containing protein 54</fullName>
    </alternativeName>
</protein>
<keyword id="KW-0217">Developmental protein</keyword>
<keyword id="KW-0325">Glycoprotein</keyword>
<keyword id="KW-0433">Leucine-rich repeat</keyword>
<keyword id="KW-0524">Neurogenesis</keyword>
<keyword id="KW-1185">Reference proteome</keyword>
<keyword id="KW-0677">Repeat</keyword>
<keyword id="KW-0964">Secreted</keyword>
<keyword id="KW-0732">Signal</keyword>
<gene>
    <name evidence="19" type="primary">Tsku</name>
    <name evidence="19" type="synonym">Lrrc54</name>
    <name evidence="17" type="synonym">Tsk</name>
</gene>
<sequence length="354" mass="38362">MLCSLFLLLLAVGRVQTTRPCFPGCQCEEETFGLFDSFSLIRVDCSSLGPHIVPVPIPLDTAHLDLSSNRLETVNESVLAGPGYTTLAGLDLSYNLLTSIMPSAFSRLRYLESLDLSHNGLAALPAEIFTSSPLSDINLSHNRLREVSISAFTTHSQGRALHVDLSHNLIHRLLPHPARASLPAPTIQSLNLSWNRFRAVPDLRDLPLRYLSLDGNPLATINPDAFMGLAGLTHLSLASLQGILHLPPHGFRELPGLQVLDLSGNPKLKWAGAEVFSGLGLLQELDLSGSSLVPLPEMLLHHLPALQSVSVGQDVQCRRLVREGAYHRQPGSSPKVVLHCGDTQESAARGPDIL</sequence>
<proteinExistence type="evidence at protein level"/>
<dbReference type="EMBL" id="AB214184">
    <property type="protein sequence ID" value="BAD98727.1"/>
    <property type="molecule type" value="mRNA"/>
</dbReference>
<dbReference type="EMBL" id="AK035461">
    <property type="protein sequence ID" value="BAC29069.1"/>
    <property type="status" value="ALT_INIT"/>
    <property type="molecule type" value="mRNA"/>
</dbReference>
<dbReference type="EMBL" id="AK137208">
    <property type="protein sequence ID" value="BAE23270.1"/>
    <property type="status" value="ALT_INIT"/>
    <property type="molecule type" value="mRNA"/>
</dbReference>
<dbReference type="CCDS" id="CCDS21469.1"/>
<dbReference type="RefSeq" id="NP_001019790.1">
    <property type="nucleotide sequence ID" value="NM_001024619.3"/>
</dbReference>
<dbReference type="RefSeq" id="NP_001162011.1">
    <property type="nucleotide sequence ID" value="NM_001168539.1"/>
</dbReference>
<dbReference type="RefSeq" id="NP_001162012.1">
    <property type="nucleotide sequence ID" value="NM_001168540.1"/>
</dbReference>
<dbReference type="RefSeq" id="NP_001162013.1">
    <property type="nucleotide sequence ID" value="NM_001168541.1"/>
</dbReference>
<dbReference type="RefSeq" id="XP_006507895.1">
    <property type="nucleotide sequence ID" value="XM_006507832.4"/>
</dbReference>
<dbReference type="RefSeq" id="XP_006507896.1">
    <property type="nucleotide sequence ID" value="XM_006507833.2"/>
</dbReference>
<dbReference type="RefSeq" id="XP_006507897.1">
    <property type="nucleotide sequence ID" value="XM_006507834.2"/>
</dbReference>
<dbReference type="RefSeq" id="XP_006507898.1">
    <property type="nucleotide sequence ID" value="XM_006507835.4"/>
</dbReference>
<dbReference type="RefSeq" id="XP_006507899.1">
    <property type="nucleotide sequence ID" value="XM_006507836.3"/>
</dbReference>
<dbReference type="RefSeq" id="XP_006507900.1">
    <property type="nucleotide sequence ID" value="XM_006507837.2"/>
</dbReference>
<dbReference type="RefSeq" id="XP_036009011.1">
    <property type="nucleotide sequence ID" value="XM_036153118.1"/>
</dbReference>
<dbReference type="RefSeq" id="XP_036009012.1">
    <property type="nucleotide sequence ID" value="XM_036153119.1"/>
</dbReference>
<dbReference type="SMR" id="Q8CBR6"/>
<dbReference type="FunCoup" id="Q8CBR6">
    <property type="interactions" value="150"/>
</dbReference>
<dbReference type="STRING" id="10090.ENSMUSP00000091713"/>
<dbReference type="GlyCosmos" id="Q8CBR6">
    <property type="glycosylation" value="3 sites, No reported glycans"/>
</dbReference>
<dbReference type="GlyGen" id="Q8CBR6">
    <property type="glycosylation" value="3 sites"/>
</dbReference>
<dbReference type="iPTMnet" id="Q8CBR6"/>
<dbReference type="PhosphoSitePlus" id="Q8CBR6"/>
<dbReference type="PaxDb" id="10090-ENSMUSP00000091713"/>
<dbReference type="ProteomicsDB" id="297981"/>
<dbReference type="Pumba" id="Q8CBR6"/>
<dbReference type="Antibodypedia" id="2163">
    <property type="antibodies" value="79 antibodies from 18 providers"/>
</dbReference>
<dbReference type="DNASU" id="244152"/>
<dbReference type="Ensembl" id="ENSMUST00000094161.11">
    <property type="protein sequence ID" value="ENSMUSP00000091713.5"/>
    <property type="gene ID" value="ENSMUSG00000049580.13"/>
</dbReference>
<dbReference type="Ensembl" id="ENSMUST00000164726.8">
    <property type="protein sequence ID" value="ENSMUSP00000130917.2"/>
    <property type="gene ID" value="ENSMUSG00000049580.13"/>
</dbReference>
<dbReference type="Ensembl" id="ENSMUST00000165257.8">
    <property type="protein sequence ID" value="ENSMUSP00000128431.2"/>
    <property type="gene ID" value="ENSMUSG00000049580.13"/>
</dbReference>
<dbReference type="Ensembl" id="ENSMUST00000165901.8">
    <property type="protein sequence ID" value="ENSMUSP00000127242.2"/>
    <property type="gene ID" value="ENSMUSG00000049580.13"/>
</dbReference>
<dbReference type="Ensembl" id="ENSMUST00000167405.3">
    <property type="protein sequence ID" value="ENSMUSP00000131789.2"/>
    <property type="gene ID" value="ENSMUSG00000049580.13"/>
</dbReference>
<dbReference type="Ensembl" id="ENSMUST00000179780.3">
    <property type="protein sequence ID" value="ENSMUSP00000137437.2"/>
    <property type="gene ID" value="ENSMUSG00000049580.13"/>
</dbReference>
<dbReference type="Ensembl" id="ENSMUST00000206414.2">
    <property type="protein sequence ID" value="ENSMUSP00000146025.2"/>
    <property type="gene ID" value="ENSMUSG00000049580.13"/>
</dbReference>
<dbReference type="GeneID" id="244152"/>
<dbReference type="KEGG" id="mmu:244152"/>
<dbReference type="UCSC" id="uc009ikh.2">
    <property type="organism name" value="mouse"/>
</dbReference>
<dbReference type="AGR" id="MGI:2443855"/>
<dbReference type="CTD" id="25987"/>
<dbReference type="MGI" id="MGI:2443855">
    <property type="gene designation" value="Tsku"/>
</dbReference>
<dbReference type="VEuPathDB" id="HostDB:ENSMUSG00000049580"/>
<dbReference type="eggNOG" id="KOG0619">
    <property type="taxonomic scope" value="Eukaryota"/>
</dbReference>
<dbReference type="GeneTree" id="ENSGT00940000160984"/>
<dbReference type="HOGENOM" id="CLU_785168_0_0_1"/>
<dbReference type="InParanoid" id="Q8CBR6"/>
<dbReference type="OMA" id="PCFPGCH"/>
<dbReference type="OrthoDB" id="676979at2759"/>
<dbReference type="PhylomeDB" id="Q8CBR6"/>
<dbReference type="TreeFam" id="TF343079"/>
<dbReference type="BioGRID-ORCS" id="244152">
    <property type="hits" value="3 hits in 79 CRISPR screens"/>
</dbReference>
<dbReference type="PRO" id="PR:Q8CBR6"/>
<dbReference type="Proteomes" id="UP000000589">
    <property type="component" value="Chromosome 7"/>
</dbReference>
<dbReference type="RNAct" id="Q8CBR6">
    <property type="molecule type" value="protein"/>
</dbReference>
<dbReference type="Bgee" id="ENSMUSG00000049580">
    <property type="expression patterns" value="Expressed in gall bladder and 134 other cell types or tissues"/>
</dbReference>
<dbReference type="ExpressionAtlas" id="Q8CBR6">
    <property type="expression patterns" value="baseline and differential"/>
</dbReference>
<dbReference type="GO" id="GO:0005615">
    <property type="term" value="C:extracellular space"/>
    <property type="evidence" value="ECO:0000314"/>
    <property type="project" value="UniProtKB"/>
</dbReference>
<dbReference type="GO" id="GO:0050431">
    <property type="term" value="F:transforming growth factor beta binding"/>
    <property type="evidence" value="ECO:0000353"/>
    <property type="project" value="UniProtKB"/>
</dbReference>
<dbReference type="GO" id="GO:0021960">
    <property type="term" value="P:anterior commissure morphogenesis"/>
    <property type="evidence" value="ECO:0000315"/>
    <property type="project" value="UniProtKB"/>
</dbReference>
<dbReference type="GO" id="GO:0043010">
    <property type="term" value="P:camera-type eye development"/>
    <property type="evidence" value="ECO:0000315"/>
    <property type="project" value="MGI"/>
</dbReference>
<dbReference type="GO" id="GO:0033344">
    <property type="term" value="P:cholesterol efflux"/>
    <property type="evidence" value="ECO:0000315"/>
    <property type="project" value="UniProtKB"/>
</dbReference>
<dbReference type="GO" id="GO:0042632">
    <property type="term" value="P:cholesterol homeostasis"/>
    <property type="evidence" value="ECO:0000315"/>
    <property type="project" value="UniProtKB"/>
</dbReference>
<dbReference type="GO" id="GO:0008203">
    <property type="term" value="P:cholesterol metabolic process"/>
    <property type="evidence" value="ECO:0000315"/>
    <property type="project" value="UniProtKB"/>
</dbReference>
<dbReference type="GO" id="GO:0061073">
    <property type="term" value="P:ciliary body morphogenesis"/>
    <property type="evidence" value="ECO:0000315"/>
    <property type="project" value="MGI"/>
</dbReference>
<dbReference type="GO" id="GO:0021540">
    <property type="term" value="P:corpus callosum morphogenesis"/>
    <property type="evidence" value="ECO:0000315"/>
    <property type="project" value="MGI"/>
</dbReference>
<dbReference type="GO" id="GO:0097009">
    <property type="term" value="P:energy homeostasis"/>
    <property type="evidence" value="ECO:0000315"/>
    <property type="project" value="UniProtKB"/>
</dbReference>
<dbReference type="GO" id="GO:0021766">
    <property type="term" value="P:hippocampus development"/>
    <property type="evidence" value="ECO:0000315"/>
    <property type="project" value="UniProtKB"/>
</dbReference>
<dbReference type="GO" id="GO:0060122">
    <property type="term" value="P:inner ear receptor cell stereocilium organization"/>
    <property type="evidence" value="ECO:0000315"/>
    <property type="project" value="UniProtKB"/>
</dbReference>
<dbReference type="GO" id="GO:0021670">
    <property type="term" value="P:lateral ventricle development"/>
    <property type="evidence" value="ECO:0000315"/>
    <property type="project" value="MGI"/>
</dbReference>
<dbReference type="GO" id="GO:1904761">
    <property type="term" value="P:negative regulation of myofibroblast differentiation"/>
    <property type="evidence" value="ECO:0000315"/>
    <property type="project" value="UniProtKB"/>
</dbReference>
<dbReference type="GO" id="GO:0010977">
    <property type="term" value="P:negative regulation of neuron projection development"/>
    <property type="evidence" value="ECO:0000315"/>
    <property type="project" value="UniProtKB"/>
</dbReference>
<dbReference type="GO" id="GO:0032911">
    <property type="term" value="P:negative regulation of transforming growth factor beta1 production"/>
    <property type="evidence" value="ECO:0000315"/>
    <property type="project" value="UniProtKB"/>
</dbReference>
<dbReference type="GO" id="GO:0030178">
    <property type="term" value="P:negative regulation of Wnt signaling pathway"/>
    <property type="evidence" value="ECO:0000314"/>
    <property type="project" value="MGI"/>
</dbReference>
<dbReference type="GO" id="GO:0042635">
    <property type="term" value="P:positive regulation of hair cycle"/>
    <property type="evidence" value="ECO:0000315"/>
    <property type="project" value="UniProtKB"/>
</dbReference>
<dbReference type="GO" id="GO:0010468">
    <property type="term" value="P:regulation of gene expression"/>
    <property type="evidence" value="ECO:0000315"/>
    <property type="project" value="MGI"/>
</dbReference>
<dbReference type="GO" id="GO:0042060">
    <property type="term" value="P:wound healing"/>
    <property type="evidence" value="ECO:0000315"/>
    <property type="project" value="UniProtKB"/>
</dbReference>
<dbReference type="FunFam" id="3.80.10.10:FF:000609">
    <property type="entry name" value="Tsukushi, small leucine rich proteoglycan"/>
    <property type="match status" value="1"/>
</dbReference>
<dbReference type="FunFam" id="3.80.10.10:FF:000308">
    <property type="entry name" value="tsukushin isoform X3"/>
    <property type="match status" value="1"/>
</dbReference>
<dbReference type="Gene3D" id="3.80.10.10">
    <property type="entry name" value="Ribonuclease Inhibitor"/>
    <property type="match status" value="2"/>
</dbReference>
<dbReference type="InterPro" id="IPR050328">
    <property type="entry name" value="Dev_Immune_Receptor"/>
</dbReference>
<dbReference type="InterPro" id="IPR001611">
    <property type="entry name" value="Leu-rich_rpt"/>
</dbReference>
<dbReference type="InterPro" id="IPR003591">
    <property type="entry name" value="Leu-rich_rpt_typical-subtyp"/>
</dbReference>
<dbReference type="InterPro" id="IPR032675">
    <property type="entry name" value="LRR_dom_sf"/>
</dbReference>
<dbReference type="PANTHER" id="PTHR24373">
    <property type="entry name" value="SLIT RELATED LEUCINE-RICH REPEAT NEURONAL PROTEIN"/>
    <property type="match status" value="1"/>
</dbReference>
<dbReference type="PANTHER" id="PTHR24373:SF352">
    <property type="entry name" value="TSUKUSHI"/>
    <property type="match status" value="1"/>
</dbReference>
<dbReference type="Pfam" id="PF13855">
    <property type="entry name" value="LRR_8"/>
    <property type="match status" value="2"/>
</dbReference>
<dbReference type="PRINTS" id="PR00019">
    <property type="entry name" value="LEURICHRPT"/>
</dbReference>
<dbReference type="SMART" id="SM00369">
    <property type="entry name" value="LRR_TYP"/>
    <property type="match status" value="7"/>
</dbReference>
<dbReference type="SUPFAM" id="SSF52058">
    <property type="entry name" value="L domain-like"/>
    <property type="match status" value="1"/>
</dbReference>
<dbReference type="PROSITE" id="PS51450">
    <property type="entry name" value="LRR"/>
    <property type="match status" value="8"/>
</dbReference>
<reference key="1">
    <citation type="submission" date="2005-05" db="EMBL/GenBank/DDBJ databases">
        <title>Loss of Tsukushi causes the retinal degradation.</title>
        <authorList>
            <person name="Kuriyama S."/>
            <person name="Ohta K."/>
            <person name="Sawai H."/>
            <person name="Takahashi M."/>
            <person name="Tanaka H."/>
        </authorList>
    </citation>
    <scope>NUCLEOTIDE SEQUENCE [MRNA]</scope>
</reference>
<reference key="2">
    <citation type="journal article" date="2005" name="Science">
        <title>The transcriptional landscape of the mammalian genome.</title>
        <authorList>
            <person name="Carninci P."/>
            <person name="Kasukawa T."/>
            <person name="Katayama S."/>
            <person name="Gough J."/>
            <person name="Frith M.C."/>
            <person name="Maeda N."/>
            <person name="Oyama R."/>
            <person name="Ravasi T."/>
            <person name="Lenhard B."/>
            <person name="Wells C."/>
            <person name="Kodzius R."/>
            <person name="Shimokawa K."/>
            <person name="Bajic V.B."/>
            <person name="Brenner S.E."/>
            <person name="Batalov S."/>
            <person name="Forrest A.R."/>
            <person name="Zavolan M."/>
            <person name="Davis M.J."/>
            <person name="Wilming L.G."/>
            <person name="Aidinis V."/>
            <person name="Allen J.E."/>
            <person name="Ambesi-Impiombato A."/>
            <person name="Apweiler R."/>
            <person name="Aturaliya R.N."/>
            <person name="Bailey T.L."/>
            <person name="Bansal M."/>
            <person name="Baxter L."/>
            <person name="Beisel K.W."/>
            <person name="Bersano T."/>
            <person name="Bono H."/>
            <person name="Chalk A.M."/>
            <person name="Chiu K.P."/>
            <person name="Choudhary V."/>
            <person name="Christoffels A."/>
            <person name="Clutterbuck D.R."/>
            <person name="Crowe M.L."/>
            <person name="Dalla E."/>
            <person name="Dalrymple B.P."/>
            <person name="de Bono B."/>
            <person name="Della Gatta G."/>
            <person name="di Bernardo D."/>
            <person name="Down T."/>
            <person name="Engstrom P."/>
            <person name="Fagiolini M."/>
            <person name="Faulkner G."/>
            <person name="Fletcher C.F."/>
            <person name="Fukushima T."/>
            <person name="Furuno M."/>
            <person name="Futaki S."/>
            <person name="Gariboldi M."/>
            <person name="Georgii-Hemming P."/>
            <person name="Gingeras T.R."/>
            <person name="Gojobori T."/>
            <person name="Green R.E."/>
            <person name="Gustincich S."/>
            <person name="Harbers M."/>
            <person name="Hayashi Y."/>
            <person name="Hensch T.K."/>
            <person name="Hirokawa N."/>
            <person name="Hill D."/>
            <person name="Huminiecki L."/>
            <person name="Iacono M."/>
            <person name="Ikeo K."/>
            <person name="Iwama A."/>
            <person name="Ishikawa T."/>
            <person name="Jakt M."/>
            <person name="Kanapin A."/>
            <person name="Katoh M."/>
            <person name="Kawasawa Y."/>
            <person name="Kelso J."/>
            <person name="Kitamura H."/>
            <person name="Kitano H."/>
            <person name="Kollias G."/>
            <person name="Krishnan S.P."/>
            <person name="Kruger A."/>
            <person name="Kummerfeld S.K."/>
            <person name="Kurochkin I.V."/>
            <person name="Lareau L.F."/>
            <person name="Lazarevic D."/>
            <person name="Lipovich L."/>
            <person name="Liu J."/>
            <person name="Liuni S."/>
            <person name="McWilliam S."/>
            <person name="Madan Babu M."/>
            <person name="Madera M."/>
            <person name="Marchionni L."/>
            <person name="Matsuda H."/>
            <person name="Matsuzawa S."/>
            <person name="Miki H."/>
            <person name="Mignone F."/>
            <person name="Miyake S."/>
            <person name="Morris K."/>
            <person name="Mottagui-Tabar S."/>
            <person name="Mulder N."/>
            <person name="Nakano N."/>
            <person name="Nakauchi H."/>
            <person name="Ng P."/>
            <person name="Nilsson R."/>
            <person name="Nishiguchi S."/>
            <person name="Nishikawa S."/>
            <person name="Nori F."/>
            <person name="Ohara O."/>
            <person name="Okazaki Y."/>
            <person name="Orlando V."/>
            <person name="Pang K.C."/>
            <person name="Pavan W.J."/>
            <person name="Pavesi G."/>
            <person name="Pesole G."/>
            <person name="Petrovsky N."/>
            <person name="Piazza S."/>
            <person name="Reed J."/>
            <person name="Reid J.F."/>
            <person name="Ring B.Z."/>
            <person name="Ringwald M."/>
            <person name="Rost B."/>
            <person name="Ruan Y."/>
            <person name="Salzberg S.L."/>
            <person name="Sandelin A."/>
            <person name="Schneider C."/>
            <person name="Schoenbach C."/>
            <person name="Sekiguchi K."/>
            <person name="Semple C.A."/>
            <person name="Seno S."/>
            <person name="Sessa L."/>
            <person name="Sheng Y."/>
            <person name="Shibata Y."/>
            <person name="Shimada H."/>
            <person name="Shimada K."/>
            <person name="Silva D."/>
            <person name="Sinclair B."/>
            <person name="Sperling S."/>
            <person name="Stupka E."/>
            <person name="Sugiura K."/>
            <person name="Sultana R."/>
            <person name="Takenaka Y."/>
            <person name="Taki K."/>
            <person name="Tammoja K."/>
            <person name="Tan S.L."/>
            <person name="Tang S."/>
            <person name="Taylor M.S."/>
            <person name="Tegner J."/>
            <person name="Teichmann S.A."/>
            <person name="Ueda H.R."/>
            <person name="van Nimwegen E."/>
            <person name="Verardo R."/>
            <person name="Wei C.L."/>
            <person name="Yagi K."/>
            <person name="Yamanishi H."/>
            <person name="Zabarovsky E."/>
            <person name="Zhu S."/>
            <person name="Zimmer A."/>
            <person name="Hide W."/>
            <person name="Bult C."/>
            <person name="Grimmond S.M."/>
            <person name="Teasdale R.D."/>
            <person name="Liu E.T."/>
            <person name="Brusic V."/>
            <person name="Quackenbush J."/>
            <person name="Wahlestedt C."/>
            <person name="Mattick J.S."/>
            <person name="Hume D.A."/>
            <person name="Kai C."/>
            <person name="Sasaki D."/>
            <person name="Tomaru Y."/>
            <person name="Fukuda S."/>
            <person name="Kanamori-Katayama M."/>
            <person name="Suzuki M."/>
            <person name="Aoki J."/>
            <person name="Arakawa T."/>
            <person name="Iida J."/>
            <person name="Imamura K."/>
            <person name="Itoh M."/>
            <person name="Kato T."/>
            <person name="Kawaji H."/>
            <person name="Kawagashira N."/>
            <person name="Kawashima T."/>
            <person name="Kojima M."/>
            <person name="Kondo S."/>
            <person name="Konno H."/>
            <person name="Nakano K."/>
            <person name="Ninomiya N."/>
            <person name="Nishio T."/>
            <person name="Okada M."/>
            <person name="Plessy C."/>
            <person name="Shibata K."/>
            <person name="Shiraki T."/>
            <person name="Suzuki S."/>
            <person name="Tagami M."/>
            <person name="Waki K."/>
            <person name="Watahiki A."/>
            <person name="Okamura-Oho Y."/>
            <person name="Suzuki H."/>
            <person name="Kawai J."/>
            <person name="Hayashizaki Y."/>
        </authorList>
    </citation>
    <scope>NUCLEOTIDE SEQUENCE [LARGE SCALE MRNA]</scope>
    <source>
        <strain>C57BL/6J</strain>
        <tissue>Urinary bladder</tissue>
    </source>
</reference>
<reference key="3">
    <citation type="journal article" date="2010" name="Biochem. Biophys. Res. Commun.">
        <title>Tsukushi is required for anterior commissure formation in mouse brain.</title>
        <authorList>
            <person name="Ito A."/>
            <person name="Shinmyo Y."/>
            <person name="Abe T."/>
            <person name="Oshima N."/>
            <person name="Tanaka H."/>
            <person name="Ohta K."/>
        </authorList>
    </citation>
    <scope>FUNCTION</scope>
    <scope>TISSUE SPECIFICITY</scope>
    <scope>DISRUPTION PHENOTYPE</scope>
</reference>
<reference key="4">
    <citation type="journal article" date="2011" name="Proc. Natl. Acad. Sci. U.S.A.">
        <title>Tsukushi functions as a Wnt signaling inhibitor by competing with Wnt2b for binding to transmembrane protein Frizzled4.</title>
        <authorList>
            <person name="Ohta K."/>
            <person name="Ito A."/>
            <person name="Kuriyama S."/>
            <person name="Lupo G."/>
            <person name="Kosaka M."/>
            <person name="Ohnuma S."/>
            <person name="Nakagawa S."/>
            <person name="Tanaka H."/>
        </authorList>
    </citation>
    <scope>FUNCTION</scope>
    <scope>INTERACTION WITH FZD4</scope>
    <scope>TISSUE SPECIFICITY</scope>
    <scope>DISRUPTION PHENOTYPE</scope>
</reference>
<reference key="5">
    <citation type="journal article" date="2012" name="Dev. Biol.">
        <title>Tsukushi controls the hair cycle by regulating TGF-beta1 signaling.</title>
        <authorList>
            <person name="Niimori D."/>
            <person name="Kawano R."/>
            <person name="Felemban A."/>
            <person name="Niimori-Kita K."/>
            <person name="Tanaka H."/>
            <person name="Ihn H."/>
            <person name="Ohta K."/>
        </authorList>
    </citation>
    <scope>FUNCTION</scope>
    <scope>INTERACTION WITH TGFB1</scope>
    <scope>TISSUE SPECIFICITY</scope>
    <scope>DEVELOPMENTAL STAGE</scope>
    <scope>DISRUPTION PHENOTYPE</scope>
</reference>
<reference key="6">
    <citation type="journal article" date="2013" name="Dev. Biol.">
        <title>The combinatorial guidance activities of draxin and Tsukushi are essential for forebrain commissure formation.</title>
        <authorList>
            <person name="Hossain M."/>
            <person name="Ahmed G."/>
            <person name="Naser I.B."/>
            <person name="Shinmyo Y."/>
            <person name="Ito A."/>
            <person name="Riyadh M.A."/>
            <person name="Felemban A."/>
            <person name="Song X."/>
            <person name="Ohta K."/>
            <person name="Tanaka H."/>
        </authorList>
    </citation>
    <scope>FUNCTION</scope>
    <scope>INTERACTION WITH NETRIN</scope>
    <scope>TISSUE SPECIFICITY</scope>
    <scope>DISRUPTION PHENOTYPE</scope>
</reference>
<reference key="7">
    <citation type="journal article" date="2014" name="J. Cell Commun. Signal.">
        <title>Tsukushi is involved in the wound healing by regulating the expression of cytokines and growth factors.</title>
        <authorList>
            <person name="Niimori D."/>
            <person name="Kawano R."/>
            <person name="Niimori-Kita K."/>
            <person name="Ihn H."/>
            <person name="Ohta K."/>
        </authorList>
    </citation>
    <scope>FUNCTION</scope>
    <scope>TISSUE SPECIFICITY</scope>
    <scope>DISRUPTION PHENOTYPE</scope>
</reference>
<reference key="8">
    <citation type="journal article" date="2017" name="Regen. Ther.">
        <title>The role of Tsukushi (TSK), a small leucine-rich repeat proteoglycan, in bone growth.</title>
        <authorList>
            <person name="Yano K."/>
            <person name="Washio K."/>
            <person name="Tsumanuma Y."/>
            <person name="Yamato M."/>
            <person name="Ohta K."/>
            <person name="Okano T."/>
            <person name="Izumi Y."/>
        </authorList>
    </citation>
    <scope>FUNCTION</scope>
    <scope>TISSUE SPECIFICITY</scope>
    <scope>DISRUPTION PHENOTYPE</scope>
</reference>
<reference key="9">
    <citation type="journal article" date="2019" name="J. Cell Commun. Signal.">
        <title>CCN2/CTGF binds the small leucine rich proteoglycan protein Tsukushi.</title>
        <authorList>
            <person name="Ohta K."/>
            <person name="Aoyama E."/>
            <person name="Ahmad S.A.I."/>
            <person name="Ito N."/>
            <person name="Anam M.B."/>
            <person name="Kubota S."/>
            <person name="Takigawa M."/>
        </authorList>
    </citation>
    <scope>INTERACTION WITH CCN2</scope>
</reference>
<reference key="10">
    <citation type="journal article" date="2019" name="JCI Insight">
        <title>The hepatokine Tsukushi is released in response to NAFLD and impacts cholesterol homeostasis.</title>
        <authorList>
            <person name="Mouchiroud M."/>
            <person name="Camire E."/>
            <person name="Aldow M."/>
            <person name="Caron A."/>
            <person name="Jubinville E."/>
            <person name="Turcotte L."/>
            <person name="Kaci I."/>
            <person name="Beaulieu M.J."/>
            <person name="Roy C."/>
            <person name="Labbe S.M."/>
            <person name="Varin T.V."/>
            <person name="Gelinas Y."/>
            <person name="Lamothe J."/>
            <person name="Trottier J."/>
            <person name="Mitchell P.L."/>
            <person name="Guenard F."/>
            <person name="Festuccia W.T."/>
            <person name="Joubert P."/>
            <person name="Rose C.F."/>
            <person name="Karvellas C.J."/>
            <person name="Barbier O."/>
            <person name="Morissette M.C."/>
            <person name="Marette A."/>
            <person name="Laplante M."/>
        </authorList>
    </citation>
    <scope>FUNCTION</scope>
    <scope>SUBCELLULAR LOCATION</scope>
    <scope>INDUCTION</scope>
    <scope>DISRUPTION PHENOTYPE</scope>
</reference>
<reference key="11">
    <citation type="journal article" date="2019" name="Mol. Metab.">
        <title>Mapping the molecular signatures of diet-induced NASH and its regulation by the hepatokine Tsukushi.</title>
        <authorList>
            <person name="Xiong X."/>
            <person name="Wang Q."/>
            <person name="Wang S."/>
            <person name="Zhang J."/>
            <person name="Liu T."/>
            <person name="Guo L."/>
            <person name="Yu Y."/>
            <person name="Lin J.D."/>
        </authorList>
    </citation>
    <scope>SUBCELLULAR LOCATION</scope>
    <scope>INDUCTION</scope>
    <scope>DISRUPTION PHENOTYPE</scope>
</reference>
<reference key="12">
    <citation type="journal article" date="2019" name="Mol. Metab.">
        <title>The Hepatokine TSK does not affect brown fat thermogenic capacity, body weight gain, and glucose homeostasis.</title>
        <authorList>
            <person name="Mouchiroud M."/>
            <person name="Camire E."/>
            <person name="Aldow M."/>
            <person name="Caron A."/>
            <person name="Jubinville E."/>
            <person name="Turcotte L."/>
            <person name="Kaci I."/>
            <person name="Beaulieu M.J."/>
            <person name="Roy C."/>
            <person name="Labbe S.M."/>
            <person name="Varin T.V."/>
            <person name="Gelinas Y."/>
            <person name="Lamothe J."/>
            <person name="Trottier J."/>
            <person name="Mitchell P.L."/>
            <person name="Guenard F."/>
            <person name="Festuccia W.T."/>
            <person name="Joubert P."/>
            <person name="Rose C.F."/>
            <person name="Karvellas C.J."/>
            <person name="Barbier O."/>
            <person name="Morissette M.C."/>
            <person name="Marette A."/>
            <person name="Laplante M."/>
        </authorList>
    </citation>
    <scope>FUNCTION</scope>
    <scope>SUBCELLULAR LOCATION</scope>
    <scope>DISRUPTION PHENOTYPE</scope>
</reference>
<reference key="13">
    <citation type="journal article" date="2019" name="Nat. Metab.">
        <title>The hepatokine Tsukushi gates energy expenditure via brown fat sympathetic innervation.</title>
        <authorList>
            <person name="Wang Q."/>
            <person name="Sharma V.P."/>
            <person name="Shen H."/>
            <person name="Xiao Y."/>
            <person name="Zhu Q."/>
            <person name="Xiong X."/>
            <person name="Guo L."/>
            <person name="Jiang L."/>
            <person name="Ohta K."/>
            <person name="Li S."/>
            <person name="Shi H."/>
            <person name="Rui L."/>
            <person name="Lin J.D."/>
        </authorList>
    </citation>
    <scope>FUNCTION</scope>
    <scope>SUBCELLULAR LOCATION</scope>
    <scope>TISSUE SPECIFICITY</scope>
    <scope>DISRUPTION PHENOTYPE</scope>
</reference>
<reference key="14">
    <citation type="journal article" date="2020" name="Dev. Growth Differ.">
        <title>Tsukushi is essential for proper maintenance and terminal differentiation of mouse hippocampal neural stem cells.</title>
        <authorList>
            <person name="Ahmad S.A.I."/>
            <person name="Anam M.B."/>
            <person name="Istiaq A."/>
            <person name="Ito N."/>
            <person name="Ohta K."/>
        </authorList>
    </citation>
    <scope>FUNCTION</scope>
    <scope>TISSUE SPECIFICITY</scope>
    <scope>DISRUPTION PHENOTYPE</scope>
</reference>
<reference key="15">
    <citation type="journal article" date="2020" name="Mol. Brain">
        <title>Tsukushi is essential for the development of the inner ear.</title>
        <authorList>
            <person name="Miwa T."/>
            <person name="Ohta K."/>
            <person name="Ito N."/>
            <person name="Hattori S."/>
            <person name="Miyakawa T."/>
            <person name="Takeo T."/>
            <person name="Nakagata N."/>
            <person name="Song W.J."/>
            <person name="Minoda R."/>
        </authorList>
    </citation>
    <scope>FUNCTION</scope>
    <scope>TISSUE SPECIFICITY</scope>
    <scope>DISRUPTION PHENOTYPE</scope>
</reference>
<feature type="signal peptide" evidence="2">
    <location>
        <begin position="1"/>
        <end position="17"/>
    </location>
</feature>
<feature type="chain" id="PRO_0000240408" description="Tsukushi">
    <location>
        <begin position="18"/>
        <end position="354"/>
    </location>
</feature>
<feature type="domain" description="LRRNT">
    <location>
        <begin position="18"/>
        <end position="59"/>
    </location>
</feature>
<feature type="repeat" description="LRR 1">
    <location>
        <begin position="60"/>
        <end position="81"/>
    </location>
</feature>
<feature type="repeat" description="LRR 2">
    <location>
        <begin position="86"/>
        <end position="107"/>
    </location>
</feature>
<feature type="repeat" description="LRR 3">
    <location>
        <begin position="110"/>
        <end position="131"/>
    </location>
</feature>
<feature type="repeat" description="LRR 4">
    <location>
        <begin position="133"/>
        <end position="154"/>
    </location>
</feature>
<feature type="repeat" description="LRR 5">
    <location>
        <begin position="160"/>
        <end position="180"/>
    </location>
</feature>
<feature type="repeat" description="LRR 6">
    <location>
        <begin position="186"/>
        <end position="207"/>
    </location>
</feature>
<feature type="repeat" description="LRR 7">
    <location>
        <begin position="208"/>
        <end position="228"/>
    </location>
</feature>
<feature type="repeat" description="LRR 8">
    <location>
        <begin position="231"/>
        <end position="253"/>
    </location>
</feature>
<feature type="repeat" description="LRR 9">
    <location>
        <begin position="256"/>
        <end position="277"/>
    </location>
</feature>
<feature type="repeat" description="LRR 10">
    <location>
        <begin position="281"/>
        <end position="302"/>
    </location>
</feature>
<feature type="glycosylation site" description="N-linked (GlcNAc...) asparagine" evidence="2">
    <location>
        <position position="75"/>
    </location>
</feature>
<feature type="glycosylation site" description="N-linked (GlcNAc...) asparagine" evidence="2">
    <location>
        <position position="138"/>
    </location>
</feature>
<feature type="glycosylation site" description="N-linked (GlcNAc...) asparagine" evidence="2">
    <location>
        <position position="191"/>
    </location>
</feature>
<evidence type="ECO:0000250" key="1">
    <source>
        <dbReference type="UniProtKB" id="Q65Z91"/>
    </source>
</evidence>
<evidence type="ECO:0000255" key="2"/>
<evidence type="ECO:0000269" key="3">
    <source>
    </source>
</evidence>
<evidence type="ECO:0000269" key="4">
    <source>
    </source>
</evidence>
<evidence type="ECO:0000269" key="5">
    <source>
    </source>
</evidence>
<evidence type="ECO:0000269" key="6">
    <source>
    </source>
</evidence>
<evidence type="ECO:0000269" key="7">
    <source>
    </source>
</evidence>
<evidence type="ECO:0000269" key="8">
    <source>
    </source>
</evidence>
<evidence type="ECO:0000269" key="9">
    <source>
    </source>
</evidence>
<evidence type="ECO:0000269" key="10">
    <source>
    </source>
</evidence>
<evidence type="ECO:0000269" key="11">
    <source>
    </source>
</evidence>
<evidence type="ECO:0000269" key="12">
    <source>
    </source>
</evidence>
<evidence type="ECO:0000269" key="13">
    <source>
    </source>
</evidence>
<evidence type="ECO:0000269" key="14">
    <source>
    </source>
</evidence>
<evidence type="ECO:0000269" key="15">
    <source>
    </source>
</evidence>
<evidence type="ECO:0000303" key="16">
    <source>
    </source>
</evidence>
<evidence type="ECO:0000303" key="17">
    <source>
    </source>
</evidence>
<evidence type="ECO:0000305" key="18"/>
<evidence type="ECO:0000312" key="19">
    <source>
        <dbReference type="MGI" id="MGI:2443855"/>
    </source>
</evidence>
<name>TSK_MOUSE</name>
<organism>
    <name type="scientific">Mus musculus</name>
    <name type="common">Mouse</name>
    <dbReference type="NCBI Taxonomy" id="10090"/>
    <lineage>
        <taxon>Eukaryota</taxon>
        <taxon>Metazoa</taxon>
        <taxon>Chordata</taxon>
        <taxon>Craniata</taxon>
        <taxon>Vertebrata</taxon>
        <taxon>Euteleostomi</taxon>
        <taxon>Mammalia</taxon>
        <taxon>Eutheria</taxon>
        <taxon>Euarchontoglires</taxon>
        <taxon>Glires</taxon>
        <taxon>Rodentia</taxon>
        <taxon>Myomorpha</taxon>
        <taxon>Muroidea</taxon>
        <taxon>Muridae</taxon>
        <taxon>Murinae</taxon>
        <taxon>Mus</taxon>
        <taxon>Mus</taxon>
    </lineage>
</organism>